<comment type="subcellular location">
    <subcellularLocation>
        <location evidence="2">Cell membrane</location>
        <topology evidence="2">Multi-pass membrane protein</topology>
    </subcellularLocation>
</comment>
<reference key="1">
    <citation type="journal article" date="1999" name="Nature">
        <title>Evidence for lateral gene transfer between Archaea and Bacteria from genome sequence of Thermotoga maritima.</title>
        <authorList>
            <person name="Nelson K.E."/>
            <person name="Clayton R.A."/>
            <person name="Gill S.R."/>
            <person name="Gwinn M.L."/>
            <person name="Dodson R.J."/>
            <person name="Haft D.H."/>
            <person name="Hickey E.K."/>
            <person name="Peterson J.D."/>
            <person name="Nelson W.C."/>
            <person name="Ketchum K.A."/>
            <person name="McDonald L.A."/>
            <person name="Utterback T.R."/>
            <person name="Malek J.A."/>
            <person name="Linher K.D."/>
            <person name="Garrett M.M."/>
            <person name="Stewart A.M."/>
            <person name="Cotton M.D."/>
            <person name="Pratt M.S."/>
            <person name="Phillips C.A."/>
            <person name="Richardson D.L."/>
            <person name="Heidelberg J.F."/>
            <person name="Sutton G.G."/>
            <person name="Fleischmann R.D."/>
            <person name="Eisen J.A."/>
            <person name="White O."/>
            <person name="Salzberg S.L."/>
            <person name="Smith H.O."/>
            <person name="Venter J.C."/>
            <person name="Fraser C.M."/>
        </authorList>
    </citation>
    <scope>NUCLEOTIDE SEQUENCE [LARGE SCALE GENOMIC DNA]</scope>
    <source>
        <strain>ATCC 43589 / DSM 3109 / JCM 10099 / NBRC 100826 / MSB8</strain>
    </source>
</reference>
<reference key="2">
    <citation type="unpublished observations" date="2001-04">
        <authorList>
            <person name="Medigue C."/>
            <person name="Bocs S."/>
        </authorList>
    </citation>
    <scope>IDENTIFICATION</scope>
</reference>
<sequence length="192" mass="22686">MLVKEREEKLNRVLVALLGIPVVFSIIRAKIVETIGYFIFWLGGFSPYVYEKITHQEIPERTKLMLSSSVFLHSVMGQFLNFYEKIFFWDKILHFYGSFVITYFFYQILTKKSRFWDEVPGAVLMAFLLGVFSGVLWEIAEFTTDKILPDYNTQKGLDDTMLDLIFDLLGCYTMAKIVYRKKTGRFFWRPRS</sequence>
<name>Y562A_THEMA</name>
<organism>
    <name type="scientific">Thermotoga maritima (strain ATCC 43589 / DSM 3109 / JCM 10099 / NBRC 100826 / MSB8)</name>
    <dbReference type="NCBI Taxonomy" id="243274"/>
    <lineage>
        <taxon>Bacteria</taxon>
        <taxon>Thermotogati</taxon>
        <taxon>Thermotogota</taxon>
        <taxon>Thermotogae</taxon>
        <taxon>Thermotogales</taxon>
        <taxon>Thermotogaceae</taxon>
        <taxon>Thermotoga</taxon>
    </lineage>
</organism>
<proteinExistence type="predicted"/>
<gene>
    <name type="ordered locus">TM_0562.1</name>
</gene>
<protein>
    <recommendedName>
        <fullName>Uncharacterized protein TM_0562.1</fullName>
    </recommendedName>
</protein>
<evidence type="ECO:0000255" key="1"/>
<evidence type="ECO:0000305" key="2"/>
<keyword id="KW-1003">Cell membrane</keyword>
<keyword id="KW-0472">Membrane</keyword>
<keyword id="KW-1185">Reference proteome</keyword>
<keyword id="KW-0812">Transmembrane</keyword>
<keyword id="KW-1133">Transmembrane helix</keyword>
<dbReference type="EMBL" id="AE000512">
    <property type="status" value="NOT_ANNOTATED_CDS"/>
    <property type="molecule type" value="Genomic_DNA"/>
</dbReference>
<dbReference type="RefSeq" id="WP_015646111.1">
    <property type="nucleotide sequence ID" value="NC_021214.1"/>
</dbReference>
<dbReference type="PaxDb" id="243274-THEMA_01860"/>
<dbReference type="KEGG" id="tmi:THEMA_01860"/>
<dbReference type="KEGG" id="tmm:Tmari_0560"/>
<dbReference type="eggNOG" id="ENOG5032B2N">
    <property type="taxonomic scope" value="Bacteria"/>
</dbReference>
<dbReference type="InParanoid" id="P58008"/>
<dbReference type="Proteomes" id="UP000008183">
    <property type="component" value="Chromosome"/>
</dbReference>
<dbReference type="GO" id="GO:0005886">
    <property type="term" value="C:plasma membrane"/>
    <property type="evidence" value="ECO:0007669"/>
    <property type="project" value="UniProtKB-SubCell"/>
</dbReference>
<feature type="chain" id="PRO_0000216214" description="Uncharacterized protein TM_0562.1">
    <location>
        <begin position="1"/>
        <end position="192"/>
    </location>
</feature>
<feature type="transmembrane region" description="Helical" evidence="1">
    <location>
        <begin position="31"/>
        <end position="51"/>
    </location>
</feature>
<feature type="transmembrane region" description="Helical" evidence="1">
    <location>
        <begin position="119"/>
        <end position="139"/>
    </location>
</feature>
<accession>P58008</accession>